<accession>P0CM62</accession>
<accession>Q55QF1</accession>
<accession>Q5KFS0</accession>
<gene>
    <name type="primary">CFT1</name>
    <name type="ordered locus">CNF00780</name>
</gene>
<reference key="1">
    <citation type="journal article" date="2005" name="Science">
        <title>The genome of the basidiomycetous yeast and human pathogen Cryptococcus neoformans.</title>
        <authorList>
            <person name="Loftus B.J."/>
            <person name="Fung E."/>
            <person name="Roncaglia P."/>
            <person name="Rowley D."/>
            <person name="Amedeo P."/>
            <person name="Bruno D."/>
            <person name="Vamathevan J."/>
            <person name="Miranda M."/>
            <person name="Anderson I.J."/>
            <person name="Fraser J.A."/>
            <person name="Allen J.E."/>
            <person name="Bosdet I.E."/>
            <person name="Brent M.R."/>
            <person name="Chiu R."/>
            <person name="Doering T.L."/>
            <person name="Donlin M.J."/>
            <person name="D'Souza C.A."/>
            <person name="Fox D.S."/>
            <person name="Grinberg V."/>
            <person name="Fu J."/>
            <person name="Fukushima M."/>
            <person name="Haas B.J."/>
            <person name="Huang J.C."/>
            <person name="Janbon G."/>
            <person name="Jones S.J.M."/>
            <person name="Koo H.L."/>
            <person name="Krzywinski M.I."/>
            <person name="Kwon-Chung K.J."/>
            <person name="Lengeler K.B."/>
            <person name="Maiti R."/>
            <person name="Marra M.A."/>
            <person name="Marra R.E."/>
            <person name="Mathewson C.A."/>
            <person name="Mitchell T.G."/>
            <person name="Pertea M."/>
            <person name="Riggs F.R."/>
            <person name="Salzberg S.L."/>
            <person name="Schein J.E."/>
            <person name="Shvartsbeyn A."/>
            <person name="Shin H."/>
            <person name="Shumway M."/>
            <person name="Specht C.A."/>
            <person name="Suh B.B."/>
            <person name="Tenney A."/>
            <person name="Utterback T.R."/>
            <person name="Wickes B.L."/>
            <person name="Wortman J.R."/>
            <person name="Wye N.H."/>
            <person name="Kronstad J.W."/>
            <person name="Lodge J.K."/>
            <person name="Heitman J."/>
            <person name="Davis R.W."/>
            <person name="Fraser C.M."/>
            <person name="Hyman R.W."/>
        </authorList>
    </citation>
    <scope>NUCLEOTIDE SEQUENCE [LARGE SCALE GENOMIC DNA]</scope>
    <source>
        <strain>JEC21 / ATCC MYA-565</strain>
    </source>
</reference>
<evidence type="ECO:0000250" key="1"/>
<evidence type="ECO:0000256" key="2">
    <source>
        <dbReference type="SAM" id="MobiDB-lite"/>
    </source>
</evidence>
<evidence type="ECO:0000305" key="3"/>
<comment type="function">
    <text evidence="1">RNA-binding component of the cleavage and polyadenylation factor (CPF) complex, which plays a key role in polyadenylation-dependent pre-mRNA 3'-end formation and cooperates with cleavage factors including the CFIA complex and NAB4/CFIB. Involved in poly(A) site recognition. May be involved in coupling transcription termination and mRNA 3'-end formation (By similarity).</text>
</comment>
<comment type="subcellular location">
    <subcellularLocation>
        <location evidence="1">Nucleus</location>
    </subcellularLocation>
</comment>
<comment type="similarity">
    <text evidence="3">Belongs to the CFT1 family.</text>
</comment>
<feature type="chain" id="PRO_0000290628" description="Protein CFT1">
    <location>
        <begin position="1"/>
        <end position="1431"/>
    </location>
</feature>
<feature type="region of interest" description="Disordered" evidence="2">
    <location>
        <begin position="721"/>
        <end position="759"/>
    </location>
</feature>
<feature type="compositionally biased region" description="Polar residues" evidence="2">
    <location>
        <begin position="740"/>
        <end position="759"/>
    </location>
</feature>
<name>CFT1_CRYNJ</name>
<organism>
    <name type="scientific">Cryptococcus neoformans var. neoformans serotype D (strain JEC21 / ATCC MYA-565)</name>
    <name type="common">Filobasidiella neoformans</name>
    <dbReference type="NCBI Taxonomy" id="214684"/>
    <lineage>
        <taxon>Eukaryota</taxon>
        <taxon>Fungi</taxon>
        <taxon>Dikarya</taxon>
        <taxon>Basidiomycota</taxon>
        <taxon>Agaricomycotina</taxon>
        <taxon>Tremellomycetes</taxon>
        <taxon>Tremellales</taxon>
        <taxon>Cryptococcaceae</taxon>
        <taxon>Cryptococcus</taxon>
        <taxon>Cryptococcus neoformans species complex</taxon>
    </lineage>
</organism>
<protein>
    <recommendedName>
        <fullName>Protein CFT1</fullName>
    </recommendedName>
    <alternativeName>
        <fullName>Cleavage factor two protein 1</fullName>
    </alternativeName>
</protein>
<keyword id="KW-0507">mRNA processing</keyword>
<keyword id="KW-0539">Nucleus</keyword>
<keyword id="KW-1185">Reference proteome</keyword>
<keyword id="KW-0694">RNA-binding</keyword>
<proteinExistence type="inferred from homology"/>
<sequence length="1431" mass="156934">MHALHQTLLPSSSIHHSLFLPHFTPSTIYPLPKPPAALDTLDVKVIGNLVVAGAEVLRVFEIREESVPIIENVKLEEDVAEGEKDVQMEEVGDGFFDDGHAERAPLKYQTTRRLHLLTQHELNGTITGLAATRTLESTIDGLDRLIVSFKDAKMALLEWSRGDIATVSLHTYERCSQMNTGDLQSYVPLLRTDPLSRLAVLTLPEDSLAVLPLIQEQSELDPLSEGFSRDAPYSPSFVLSLSDMSITIKNIQDLLFLPGFHSPTIALLFSPMHTWSGRLQTVKDTFCLEIRTFDLSSGTSYPLLTSVSGLPSDSLYLVACPSELGGIVLVTSTGIVHVDQGGRVTAACVNAWWSRITSLKCSMASVSQKLTLEGSRCVFVTPHDMLLVLQNGAVHQVRFSMEGRAVGVIEVLDKGCVVPPPSDLTVAGDGAVFVGSAEGDSWLAKVNVVRQVVERSEKKKDEMEVDWDEDLYGDINDAALDEKAQELFGPAAITLSPYDILTGVGKIMDIEFGIAASDQGLRTYPQLVAVSGGSRNSTINVFRRGIPITKRRRFNELLNAEGVWFLPIDRQTGQKFKDIPEAERATILLSSEGNATRVFALFSKPTPQQIGRLDGKTLSAAPFFQRSCILRVSPLEVVLLDNNGKIIQTVCPRGDGPKIVNASISDPFVIIRRADDSVTFFVGDTVARTVAEAPIVSEGESPVCQAVEVFTDTTGVYRTFEPSKSESSEPISHQIDSENKPNITNGINGTTARSARQTQLTPQQIKRLQEQEPAITTEAPSMETAINSPHGTQWLALVTRGGELQIRSLPDLQIVLQSEGLASSAPSFTDDLGENPGYVLGEKREEGEEEDEIIQMVFCPIGKGTVRQHLLALHHSGRLNAYEAQPRFTVDASSHSRRSLAVRFRKVHTQLLPISGGVGTTNGNARLPYTIVPFNNIEGLTGAFITGEKPHWIISSEAHPLRAFALKQAAMAFGKTTHLGGKGEYFIRIEDGSFICYLPPTLNTDFAIPCDRYQMERAYTNITFDPTSAHYVGAASIEVPFQAYDEEGEIQLGPDGPDLIPPTNQRSTLELFSQGSDPWKVIDGYEFDQNEEVMSMESVNLESPGAPGGYRDFIAVGTGFNFGEDRATRGNTYIFEILQTVGPQGGGGPGSVPGWKLVKRTKDPARHPVNAVNHINGYLLNTNGPKLYVKGLDYDSQLMGLAFLDIQLYATTVKVFKNFMLIGDLCKSFWFVSLQEDPYKFTTISKDLQHVSVVTADFLVHDGQVTFISSDRNGDMRMLDFDPTDPDSLNGERLMLRTEYHAGSAATVSKVIARRKTAEEEFAPQTQIIYATADGALTTVVSVKDARFKRLQLVSDQLVRNAQHVAGLNPRAFRTVRNDLLPRPLSKGILDGQLLNQFALQPIGRQKEMMRQIGTDAVTVASDLQALGGFW</sequence>
<dbReference type="EMBL" id="AE017346">
    <property type="protein sequence ID" value="AAW44183.1"/>
    <property type="molecule type" value="Genomic_DNA"/>
</dbReference>
<dbReference type="RefSeq" id="XP_571490.1">
    <property type="nucleotide sequence ID" value="XM_571490.1"/>
</dbReference>
<dbReference type="SMR" id="P0CM62"/>
<dbReference type="FunCoup" id="P0CM62">
    <property type="interactions" value="671"/>
</dbReference>
<dbReference type="STRING" id="214684.P0CM62"/>
<dbReference type="PaxDb" id="214684-P0CM62"/>
<dbReference type="EnsemblFungi" id="AAW44183">
    <property type="protein sequence ID" value="AAW44183"/>
    <property type="gene ID" value="CNF00780"/>
</dbReference>
<dbReference type="GeneID" id="3258187"/>
<dbReference type="KEGG" id="cne:CNF00780"/>
<dbReference type="VEuPathDB" id="FungiDB:CNF00780"/>
<dbReference type="eggNOG" id="KOG1896">
    <property type="taxonomic scope" value="Eukaryota"/>
</dbReference>
<dbReference type="HOGENOM" id="CLU_002414_0_0_1"/>
<dbReference type="InParanoid" id="P0CM62"/>
<dbReference type="OMA" id="PMTKFKL"/>
<dbReference type="OrthoDB" id="6109at2759"/>
<dbReference type="Proteomes" id="UP000002149">
    <property type="component" value="Chromosome 6"/>
</dbReference>
<dbReference type="GO" id="GO:0005847">
    <property type="term" value="C:mRNA cleavage and polyadenylation specificity factor complex"/>
    <property type="evidence" value="ECO:0000318"/>
    <property type="project" value="GO_Central"/>
</dbReference>
<dbReference type="GO" id="GO:0005634">
    <property type="term" value="C:nucleus"/>
    <property type="evidence" value="ECO:0000318"/>
    <property type="project" value="GO_Central"/>
</dbReference>
<dbReference type="GO" id="GO:0003723">
    <property type="term" value="F:RNA binding"/>
    <property type="evidence" value="ECO:0007669"/>
    <property type="project" value="UniProtKB-KW"/>
</dbReference>
<dbReference type="GO" id="GO:0006397">
    <property type="term" value="P:mRNA processing"/>
    <property type="evidence" value="ECO:0007669"/>
    <property type="project" value="UniProtKB-KW"/>
</dbReference>
<dbReference type="FunFam" id="2.130.10.10:FF:000730">
    <property type="entry name" value="Chromosome 15, whole genome shotgun sequence"/>
    <property type="match status" value="1"/>
</dbReference>
<dbReference type="Gene3D" id="2.130.10.10">
    <property type="entry name" value="YVTN repeat-like/Quinoprotein amine dehydrogenase"/>
    <property type="match status" value="3"/>
</dbReference>
<dbReference type="InterPro" id="IPR018846">
    <property type="entry name" value="Beta-prop_RSE1/DDB1/CPSF1_1st"/>
</dbReference>
<dbReference type="InterPro" id="IPR004871">
    <property type="entry name" value="Cleavage/polyA-sp_fac_asu_C"/>
</dbReference>
<dbReference type="InterPro" id="IPR050358">
    <property type="entry name" value="RSE1/DDB1/CFT1/CPSF1"/>
</dbReference>
<dbReference type="InterPro" id="IPR015943">
    <property type="entry name" value="WD40/YVTN_repeat-like_dom_sf"/>
</dbReference>
<dbReference type="PANTHER" id="PTHR10644">
    <property type="entry name" value="DNA REPAIR/RNA PROCESSING CPSF FAMILY"/>
    <property type="match status" value="1"/>
</dbReference>
<dbReference type="Pfam" id="PF10433">
    <property type="entry name" value="Beta-prop_RSE1_1st"/>
    <property type="match status" value="1"/>
</dbReference>
<dbReference type="Pfam" id="PF03178">
    <property type="entry name" value="CPSF_A"/>
    <property type="match status" value="1"/>
</dbReference>